<organism>
    <name type="scientific">Arthroderma otae (strain ATCC MYA-4605 / CBS 113480)</name>
    <name type="common">Microsporum canis</name>
    <dbReference type="NCBI Taxonomy" id="554155"/>
    <lineage>
        <taxon>Eukaryota</taxon>
        <taxon>Fungi</taxon>
        <taxon>Dikarya</taxon>
        <taxon>Ascomycota</taxon>
        <taxon>Pezizomycotina</taxon>
        <taxon>Eurotiomycetes</taxon>
        <taxon>Eurotiomycetidae</taxon>
        <taxon>Onygenales</taxon>
        <taxon>Arthrodermataceae</taxon>
        <taxon>Microsporum</taxon>
    </lineage>
</organism>
<name>SHO1_ARTOC</name>
<dbReference type="EMBL" id="DS995702">
    <property type="protein sequence ID" value="EEQ28817.1"/>
    <property type="molecule type" value="Genomic_DNA"/>
</dbReference>
<dbReference type="RefSeq" id="XP_002848702.1">
    <property type="nucleotide sequence ID" value="XM_002848656.1"/>
</dbReference>
<dbReference type="SMR" id="C5FH98"/>
<dbReference type="STRING" id="554155.C5FH98"/>
<dbReference type="GeneID" id="9222958"/>
<dbReference type="VEuPathDB" id="FungiDB:MCYG_01636"/>
<dbReference type="eggNOG" id="ENOG502QW7A">
    <property type="taxonomic scope" value="Eukaryota"/>
</dbReference>
<dbReference type="HOGENOM" id="CLU_043316_1_0_1"/>
<dbReference type="OMA" id="NIVWIFY"/>
<dbReference type="OrthoDB" id="5983572at2759"/>
<dbReference type="Proteomes" id="UP000002035">
    <property type="component" value="Unassembled WGS sequence"/>
</dbReference>
<dbReference type="GO" id="GO:0005886">
    <property type="term" value="C:plasma membrane"/>
    <property type="evidence" value="ECO:0007669"/>
    <property type="project" value="UniProtKB-SubCell"/>
</dbReference>
<dbReference type="CDD" id="cd11855">
    <property type="entry name" value="SH3_Sho1p"/>
    <property type="match status" value="1"/>
</dbReference>
<dbReference type="FunFam" id="2.30.30.40:FF:000213">
    <property type="entry name" value="High osmolarity signaling protein SHO1"/>
    <property type="match status" value="1"/>
</dbReference>
<dbReference type="Gene3D" id="2.30.30.40">
    <property type="entry name" value="SH3 Domains"/>
    <property type="match status" value="1"/>
</dbReference>
<dbReference type="InterPro" id="IPR036028">
    <property type="entry name" value="SH3-like_dom_sf"/>
</dbReference>
<dbReference type="InterPro" id="IPR001452">
    <property type="entry name" value="SH3_domain"/>
</dbReference>
<dbReference type="InterPro" id="IPR035522">
    <property type="entry name" value="Sho1_SH3"/>
</dbReference>
<dbReference type="Pfam" id="PF00018">
    <property type="entry name" value="SH3_1"/>
    <property type="match status" value="1"/>
</dbReference>
<dbReference type="PRINTS" id="PR00452">
    <property type="entry name" value="SH3DOMAIN"/>
</dbReference>
<dbReference type="SMART" id="SM00326">
    <property type="entry name" value="SH3"/>
    <property type="match status" value="1"/>
</dbReference>
<dbReference type="SUPFAM" id="SSF50044">
    <property type="entry name" value="SH3-domain"/>
    <property type="match status" value="1"/>
</dbReference>
<dbReference type="PROSITE" id="PS50002">
    <property type="entry name" value="SH3"/>
    <property type="match status" value="1"/>
</dbReference>
<accession>C5FH98</accession>
<feature type="chain" id="PRO_0000410356" description="High osmolarity signaling protein SHO1">
    <location>
        <begin position="1"/>
        <end position="284"/>
    </location>
</feature>
<feature type="topological domain" description="Cytoplasmic" evidence="2">
    <location>
        <begin position="1"/>
        <end position="14"/>
    </location>
</feature>
<feature type="transmembrane region" description="Helical" evidence="2">
    <location>
        <begin position="15"/>
        <end position="35"/>
    </location>
</feature>
<feature type="topological domain" description="Extracellular" evidence="2">
    <location>
        <begin position="36"/>
        <end position="44"/>
    </location>
</feature>
<feature type="transmembrane region" description="Helical" evidence="2">
    <location>
        <begin position="45"/>
        <end position="65"/>
    </location>
</feature>
<feature type="topological domain" description="Cytoplasmic" evidence="2">
    <location>
        <begin position="66"/>
        <end position="74"/>
    </location>
</feature>
<feature type="transmembrane region" description="Helical" evidence="2">
    <location>
        <begin position="75"/>
        <end position="95"/>
    </location>
</feature>
<feature type="topological domain" description="Extracellular" evidence="2">
    <location>
        <begin position="96"/>
        <end position="103"/>
    </location>
</feature>
<feature type="transmembrane region" description="Helical" evidence="2">
    <location>
        <begin position="104"/>
        <end position="124"/>
    </location>
</feature>
<feature type="topological domain" description="Cytoplasmic" evidence="2">
    <location>
        <begin position="125"/>
        <end position="284"/>
    </location>
</feature>
<feature type="domain" description="SH3" evidence="3">
    <location>
        <begin position="225"/>
        <end position="284"/>
    </location>
</feature>
<feature type="region of interest" description="Disordered" evidence="4">
    <location>
        <begin position="138"/>
        <end position="170"/>
    </location>
</feature>
<feature type="compositionally biased region" description="Polar residues" evidence="4">
    <location>
        <begin position="146"/>
        <end position="169"/>
    </location>
</feature>
<protein>
    <recommendedName>
        <fullName>High osmolarity signaling protein SHO1</fullName>
    </recommendedName>
    <alternativeName>
        <fullName>Osmosensor SHO1</fullName>
    </alternativeName>
</protein>
<keyword id="KW-1003">Cell membrane</keyword>
<keyword id="KW-0472">Membrane</keyword>
<keyword id="KW-1185">Reference proteome</keyword>
<keyword id="KW-0728">SH3 domain</keyword>
<keyword id="KW-0346">Stress response</keyword>
<keyword id="KW-0812">Transmembrane</keyword>
<keyword id="KW-1133">Transmembrane helix</keyword>
<gene>
    <name type="primary">SHO1</name>
    <name type="ORF">MCYG_01636</name>
</gene>
<comment type="function">
    <text evidence="1">Plasma membrane osmosensor that activates the high osmolarity glycerol (HOG) MAPK signaling pathway in response to high osmolarity.</text>
</comment>
<comment type="subunit">
    <text evidence="1">Forms homooligomers.</text>
</comment>
<comment type="subcellular location">
    <subcellularLocation>
        <location evidence="1">Cell membrane</location>
        <topology evidence="1">Multi-pass membrane protein</topology>
    </subcellularLocation>
</comment>
<comment type="similarity">
    <text evidence="5">Belongs to the SHO1 family.</text>
</comment>
<proteinExistence type="inferred from homology"/>
<evidence type="ECO:0000250" key="1"/>
<evidence type="ECO:0000255" key="2"/>
<evidence type="ECO:0000255" key="3">
    <source>
        <dbReference type="PROSITE-ProRule" id="PRU00192"/>
    </source>
</evidence>
<evidence type="ECO:0000256" key="4">
    <source>
        <dbReference type="SAM" id="MobiDB-lite"/>
    </source>
</evidence>
<evidence type="ECO:0000305" key="5"/>
<sequence>MARFQMSNLVGDPFALATVSIAILAWIITVVSCIIAQTKEAIPNFFWWSVAYQFCIVVGITAVMGSNTGHVYSTAIVGYAAAGLVCTTFTIDGLVTSKEGARQSGGAGLILLAMTDIVWIFYFGSTPQSRPRTYIDSFAPHKEQPSYRSSKPISHSYTPRPETTVSSAHQPHLYSSAPLSGFESSPMAGYNATTASSTGIQPMVGLQTNASTVGGDTAEIGQPTEYPYRAKAIYSYEANPDDANEISFTKHEILEVSDVSGRWWQAKKSTGETGIAPSNYLILL</sequence>
<reference key="1">
    <citation type="journal article" date="2012" name="MBio">
        <title>Comparative genome analysis of Trichophyton rubrum and related dermatophytes reveals candidate genes involved in infection.</title>
        <authorList>
            <person name="Martinez D.A."/>
            <person name="Oliver B.G."/>
            <person name="Graeser Y."/>
            <person name="Goldberg J.M."/>
            <person name="Li W."/>
            <person name="Martinez-Rossi N.M."/>
            <person name="Monod M."/>
            <person name="Shelest E."/>
            <person name="Barton R.C."/>
            <person name="Birch E."/>
            <person name="Brakhage A.A."/>
            <person name="Chen Z."/>
            <person name="Gurr S.J."/>
            <person name="Heiman D."/>
            <person name="Heitman J."/>
            <person name="Kosti I."/>
            <person name="Rossi A."/>
            <person name="Saif S."/>
            <person name="Samalova M."/>
            <person name="Saunders C.W."/>
            <person name="Shea T."/>
            <person name="Summerbell R.C."/>
            <person name="Xu J."/>
            <person name="Young S."/>
            <person name="Zeng Q."/>
            <person name="Birren B.W."/>
            <person name="Cuomo C.A."/>
            <person name="White T.C."/>
        </authorList>
    </citation>
    <scope>NUCLEOTIDE SEQUENCE [LARGE SCALE GENOMIC DNA]</scope>
    <source>
        <strain>ATCC MYA-4605 / CBS 113480</strain>
    </source>
</reference>